<gene>
    <name evidence="1" type="primary">dapE</name>
    <name type="ordered locus">Mmc1_0046</name>
</gene>
<reference key="1">
    <citation type="journal article" date="2009" name="Appl. Environ. Microbiol.">
        <title>Complete genome sequence of the chemolithoautotrophic marine magnetotactic coccus strain MC-1.</title>
        <authorList>
            <person name="Schubbe S."/>
            <person name="Williams T.J."/>
            <person name="Xie G."/>
            <person name="Kiss H.E."/>
            <person name="Brettin T.S."/>
            <person name="Martinez D."/>
            <person name="Ross C.A."/>
            <person name="Schuler D."/>
            <person name="Cox B.L."/>
            <person name="Nealson K.H."/>
            <person name="Bazylinski D.A."/>
        </authorList>
    </citation>
    <scope>NUCLEOTIDE SEQUENCE [LARGE SCALE GENOMIC DNA]</scope>
    <source>
        <strain>ATCC BAA-1437 / JCM 17883 / MC-1</strain>
    </source>
</reference>
<organism>
    <name type="scientific">Magnetococcus marinus (strain ATCC BAA-1437 / JCM 17883 / MC-1)</name>
    <dbReference type="NCBI Taxonomy" id="156889"/>
    <lineage>
        <taxon>Bacteria</taxon>
        <taxon>Pseudomonadati</taxon>
        <taxon>Pseudomonadota</taxon>
        <taxon>Alphaproteobacteria</taxon>
        <taxon>Magnetococcales</taxon>
        <taxon>Magnetococcaceae</taxon>
        <taxon>Magnetococcus</taxon>
    </lineage>
</organism>
<proteinExistence type="inferred from homology"/>
<evidence type="ECO:0000255" key="1">
    <source>
        <dbReference type="HAMAP-Rule" id="MF_01690"/>
    </source>
</evidence>
<evidence type="ECO:0000305" key="2"/>
<accession>A0L3N2</accession>
<comment type="function">
    <text evidence="1">Catalyzes the hydrolysis of N-succinyl-L,L-diaminopimelic acid (SDAP), forming succinate and LL-2,6-diaminopimelate (DAP), an intermediate involved in the bacterial biosynthesis of lysine and meso-diaminopimelic acid, an essential component of bacterial cell walls.</text>
</comment>
<comment type="catalytic activity">
    <reaction evidence="1">
        <text>N-succinyl-(2S,6S)-2,6-diaminopimelate + H2O = (2S,6S)-2,6-diaminopimelate + succinate</text>
        <dbReference type="Rhea" id="RHEA:22608"/>
        <dbReference type="ChEBI" id="CHEBI:15377"/>
        <dbReference type="ChEBI" id="CHEBI:30031"/>
        <dbReference type="ChEBI" id="CHEBI:57609"/>
        <dbReference type="ChEBI" id="CHEBI:58087"/>
        <dbReference type="EC" id="3.5.1.18"/>
    </reaction>
</comment>
<comment type="cofactor">
    <cofactor evidence="1">
        <name>Zn(2+)</name>
        <dbReference type="ChEBI" id="CHEBI:29105"/>
    </cofactor>
    <cofactor evidence="1">
        <name>Co(2+)</name>
        <dbReference type="ChEBI" id="CHEBI:48828"/>
    </cofactor>
    <text evidence="1">Binds 2 Zn(2+) or Co(2+) ions per subunit.</text>
</comment>
<comment type="pathway">
    <text evidence="1">Amino-acid biosynthesis; L-lysine biosynthesis via DAP pathway; LL-2,6-diaminopimelate from (S)-tetrahydrodipicolinate (succinylase route): step 3/3.</text>
</comment>
<comment type="subunit">
    <text evidence="1">Homodimer.</text>
</comment>
<comment type="similarity">
    <text evidence="1">Belongs to the peptidase M20A family. DapE subfamily.</text>
</comment>
<comment type="sequence caution" evidence="2">
    <conflict type="erroneous initiation">
        <sequence resource="EMBL-CDS" id="ABK42575"/>
    </conflict>
</comment>
<protein>
    <recommendedName>
        <fullName evidence="1">Succinyl-diaminopimelate desuccinylase</fullName>
        <shortName evidence="1">SDAP desuccinylase</shortName>
        <ecNumber evidence="1">3.5.1.18</ecNumber>
    </recommendedName>
    <alternativeName>
        <fullName evidence="1">N-succinyl-LL-2,6-diaminoheptanedioate amidohydrolase</fullName>
    </alternativeName>
</protein>
<name>DAPE_MAGMM</name>
<dbReference type="EC" id="3.5.1.18" evidence="1"/>
<dbReference type="EMBL" id="CP000471">
    <property type="protein sequence ID" value="ABK42575.1"/>
    <property type="status" value="ALT_INIT"/>
    <property type="molecule type" value="Genomic_DNA"/>
</dbReference>
<dbReference type="SMR" id="A0L3N2"/>
<dbReference type="STRING" id="156889.Mmc1_0046"/>
<dbReference type="KEGG" id="mgm:Mmc1_0046"/>
<dbReference type="eggNOG" id="COG0624">
    <property type="taxonomic scope" value="Bacteria"/>
</dbReference>
<dbReference type="HOGENOM" id="CLU_021802_4_0_5"/>
<dbReference type="OrthoDB" id="9809784at2"/>
<dbReference type="UniPathway" id="UPA00034">
    <property type="reaction ID" value="UER00021"/>
</dbReference>
<dbReference type="Proteomes" id="UP000002586">
    <property type="component" value="Chromosome"/>
</dbReference>
<dbReference type="GO" id="GO:0008777">
    <property type="term" value="F:acetylornithine deacetylase activity"/>
    <property type="evidence" value="ECO:0007669"/>
    <property type="project" value="TreeGrafter"/>
</dbReference>
<dbReference type="GO" id="GO:0050897">
    <property type="term" value="F:cobalt ion binding"/>
    <property type="evidence" value="ECO:0007669"/>
    <property type="project" value="UniProtKB-UniRule"/>
</dbReference>
<dbReference type="GO" id="GO:0009014">
    <property type="term" value="F:succinyl-diaminopimelate desuccinylase activity"/>
    <property type="evidence" value="ECO:0007669"/>
    <property type="project" value="UniProtKB-UniRule"/>
</dbReference>
<dbReference type="GO" id="GO:0008270">
    <property type="term" value="F:zinc ion binding"/>
    <property type="evidence" value="ECO:0007669"/>
    <property type="project" value="UniProtKB-UniRule"/>
</dbReference>
<dbReference type="GO" id="GO:0019877">
    <property type="term" value="P:diaminopimelate biosynthetic process"/>
    <property type="evidence" value="ECO:0007669"/>
    <property type="project" value="UniProtKB-UniRule"/>
</dbReference>
<dbReference type="GO" id="GO:0006526">
    <property type="term" value="P:L-arginine biosynthetic process"/>
    <property type="evidence" value="ECO:0007669"/>
    <property type="project" value="TreeGrafter"/>
</dbReference>
<dbReference type="GO" id="GO:0009089">
    <property type="term" value="P:lysine biosynthetic process via diaminopimelate"/>
    <property type="evidence" value="ECO:0007669"/>
    <property type="project" value="UniProtKB-UniRule"/>
</dbReference>
<dbReference type="CDD" id="cd03891">
    <property type="entry name" value="M20_DapE_proteobac"/>
    <property type="match status" value="1"/>
</dbReference>
<dbReference type="Gene3D" id="3.40.630.10">
    <property type="entry name" value="Zn peptidases"/>
    <property type="match status" value="2"/>
</dbReference>
<dbReference type="HAMAP" id="MF_01690">
    <property type="entry name" value="DapE"/>
    <property type="match status" value="1"/>
</dbReference>
<dbReference type="InterPro" id="IPR036264">
    <property type="entry name" value="Bact_exopeptidase_dim_dom"/>
</dbReference>
<dbReference type="InterPro" id="IPR005941">
    <property type="entry name" value="DapE_proteobac"/>
</dbReference>
<dbReference type="InterPro" id="IPR002933">
    <property type="entry name" value="Peptidase_M20"/>
</dbReference>
<dbReference type="InterPro" id="IPR011650">
    <property type="entry name" value="Peptidase_M20_dimer"/>
</dbReference>
<dbReference type="InterPro" id="IPR050072">
    <property type="entry name" value="Peptidase_M20A"/>
</dbReference>
<dbReference type="NCBIfam" id="TIGR01246">
    <property type="entry name" value="dapE_proteo"/>
    <property type="match status" value="1"/>
</dbReference>
<dbReference type="NCBIfam" id="NF009557">
    <property type="entry name" value="PRK13009.1"/>
    <property type="match status" value="1"/>
</dbReference>
<dbReference type="PANTHER" id="PTHR43808">
    <property type="entry name" value="ACETYLORNITHINE DEACETYLASE"/>
    <property type="match status" value="1"/>
</dbReference>
<dbReference type="PANTHER" id="PTHR43808:SF31">
    <property type="entry name" value="N-ACETYL-L-CITRULLINE DEACETYLASE"/>
    <property type="match status" value="1"/>
</dbReference>
<dbReference type="Pfam" id="PF07687">
    <property type="entry name" value="M20_dimer"/>
    <property type="match status" value="1"/>
</dbReference>
<dbReference type="Pfam" id="PF01546">
    <property type="entry name" value="Peptidase_M20"/>
    <property type="match status" value="1"/>
</dbReference>
<dbReference type="SUPFAM" id="SSF55031">
    <property type="entry name" value="Bacterial exopeptidase dimerisation domain"/>
    <property type="match status" value="1"/>
</dbReference>
<dbReference type="SUPFAM" id="SSF53187">
    <property type="entry name" value="Zn-dependent exopeptidases"/>
    <property type="match status" value="1"/>
</dbReference>
<sequence length="380" mass="41065">MVDPVALARALIQAPSVTPMDHGCQDLLIRHLEDLGFTVHRLRFGHVENFYARLGSKGRNFTFAGHTDVVGAGDTSRWSSDPFAATLEEGYITGRGAVDMKGGLACMVAATARFLAARPHFAQQHSLSFLITGDEEGDALDGTLKVLQWLESQQEKMDYCLVGEPTSAAQLGDCIKNGRRGSVNGRLTIRGVQGHVAYPHLVDNPIHRAAPVLAAISSMTFDQGDRFFQPTSLQFTAVQSGGSATNVVPGELTAGFNIRFSAMHTPESLEARIRQVLDGAEVDYDLQMMTSGLPFITEGGPLVEAVKATVAQVTGLEPQLSTGGGTSDARFISRHCVQTVEFGLVGSTMHKVDERVPVADLEVLTEVYRRLLERLYPPQG</sequence>
<feature type="chain" id="PRO_0000375603" description="Succinyl-diaminopimelate desuccinylase">
    <location>
        <begin position="1"/>
        <end position="380"/>
    </location>
</feature>
<feature type="active site" evidence="1">
    <location>
        <position position="68"/>
    </location>
</feature>
<feature type="active site" description="Proton acceptor" evidence="1">
    <location>
        <position position="135"/>
    </location>
</feature>
<feature type="binding site" evidence="1">
    <location>
        <position position="66"/>
    </location>
    <ligand>
        <name>Zn(2+)</name>
        <dbReference type="ChEBI" id="CHEBI:29105"/>
        <label>1</label>
    </ligand>
</feature>
<feature type="binding site" evidence="1">
    <location>
        <position position="99"/>
    </location>
    <ligand>
        <name>Zn(2+)</name>
        <dbReference type="ChEBI" id="CHEBI:29105"/>
        <label>1</label>
    </ligand>
</feature>
<feature type="binding site" evidence="1">
    <location>
        <position position="99"/>
    </location>
    <ligand>
        <name>Zn(2+)</name>
        <dbReference type="ChEBI" id="CHEBI:29105"/>
        <label>2</label>
    </ligand>
</feature>
<feature type="binding site" evidence="1">
    <location>
        <position position="136"/>
    </location>
    <ligand>
        <name>Zn(2+)</name>
        <dbReference type="ChEBI" id="CHEBI:29105"/>
        <label>2</label>
    </ligand>
</feature>
<feature type="binding site" evidence="1">
    <location>
        <position position="164"/>
    </location>
    <ligand>
        <name>Zn(2+)</name>
        <dbReference type="ChEBI" id="CHEBI:29105"/>
        <label>1</label>
    </ligand>
</feature>
<feature type="binding site" evidence="1">
    <location>
        <position position="350"/>
    </location>
    <ligand>
        <name>Zn(2+)</name>
        <dbReference type="ChEBI" id="CHEBI:29105"/>
        <label>2</label>
    </ligand>
</feature>
<keyword id="KW-0028">Amino-acid biosynthesis</keyword>
<keyword id="KW-0170">Cobalt</keyword>
<keyword id="KW-0220">Diaminopimelate biosynthesis</keyword>
<keyword id="KW-0378">Hydrolase</keyword>
<keyword id="KW-0457">Lysine biosynthesis</keyword>
<keyword id="KW-0479">Metal-binding</keyword>
<keyword id="KW-1185">Reference proteome</keyword>
<keyword id="KW-0862">Zinc</keyword>